<keyword id="KW-0002">3D-structure</keyword>
<keyword id="KW-0028">Amino-acid biosynthesis</keyword>
<keyword id="KW-0963">Cytoplasm</keyword>
<keyword id="KW-0368">Histidine biosynthesis</keyword>
<keyword id="KW-1185">Reference proteome</keyword>
<feature type="chain" id="PRO_0000171072" description="ATP phosphoribosyltransferase regulatory subunit">
    <location>
        <begin position="1"/>
        <end position="275"/>
    </location>
</feature>
<feature type="helix" evidence="3">
    <location>
        <begin position="6"/>
        <end position="18"/>
    </location>
</feature>
<feature type="strand" evidence="3">
    <location>
        <begin position="28"/>
        <end position="31"/>
    </location>
</feature>
<feature type="strand" evidence="3">
    <location>
        <begin position="40"/>
        <end position="42"/>
    </location>
</feature>
<feature type="strand" evidence="3">
    <location>
        <begin position="47"/>
        <end position="50"/>
    </location>
</feature>
<feature type="helix" evidence="3">
    <location>
        <begin position="54"/>
        <end position="62"/>
    </location>
</feature>
<feature type="strand" evidence="3">
    <location>
        <begin position="65"/>
        <end position="67"/>
    </location>
</feature>
<feature type="strand" evidence="3">
    <location>
        <begin position="71"/>
        <end position="74"/>
    </location>
</feature>
<feature type="strand" evidence="3">
    <location>
        <begin position="77"/>
        <end position="83"/>
    </location>
</feature>
<feature type="strand" evidence="3">
    <location>
        <begin position="86"/>
        <end position="99"/>
    </location>
</feature>
<feature type="helix" evidence="3">
    <location>
        <begin position="103"/>
        <end position="120"/>
    </location>
</feature>
<feature type="strand" evidence="3">
    <location>
        <begin position="125"/>
        <end position="131"/>
    </location>
</feature>
<feature type="helix" evidence="3">
    <location>
        <begin position="134"/>
        <end position="139"/>
    </location>
</feature>
<feature type="strand" evidence="3">
    <location>
        <begin position="140"/>
        <end position="142"/>
    </location>
</feature>
<feature type="helix" evidence="3">
    <location>
        <begin position="144"/>
        <end position="146"/>
    </location>
</feature>
<feature type="helix" evidence="3">
    <location>
        <begin position="147"/>
        <end position="155"/>
    </location>
</feature>
<feature type="helix" evidence="3">
    <location>
        <begin position="159"/>
        <end position="168"/>
    </location>
</feature>
<feature type="helix" evidence="3">
    <location>
        <begin position="175"/>
        <end position="185"/>
    </location>
</feature>
<feature type="helix" evidence="3">
    <location>
        <begin position="189"/>
        <end position="193"/>
    </location>
</feature>
<feature type="helix" evidence="3">
    <location>
        <begin position="199"/>
        <end position="215"/>
    </location>
</feature>
<feature type="strand" evidence="3">
    <location>
        <begin position="217"/>
        <end position="223"/>
    </location>
</feature>
<feature type="helix" evidence="3">
    <location>
        <begin position="228"/>
        <end position="232"/>
    </location>
</feature>
<feature type="strand" evidence="3">
    <location>
        <begin position="235"/>
        <end position="243"/>
    </location>
</feature>
<feature type="turn" evidence="3">
    <location>
        <begin position="244"/>
        <end position="247"/>
    </location>
</feature>
<feature type="strand" evidence="3">
    <location>
        <begin position="248"/>
        <end position="258"/>
    </location>
</feature>
<feature type="strand" evidence="3">
    <location>
        <begin position="261"/>
        <end position="274"/>
    </location>
</feature>
<comment type="function">
    <text evidence="1">Required for the first step of histidine biosynthesis. May allow the feedback regulation of ATP phosphoribosyltransferase activity by histidine (By similarity).</text>
</comment>
<comment type="pathway">
    <text>Amino-acid biosynthesis; L-histidine biosynthesis; L-histidine from 5-phospho-alpha-D-ribose 1-diphosphate: step 1/9.</text>
</comment>
<comment type="subunit">
    <text evidence="1">Heteromultimer composed of HisG and HisZ subunits.</text>
</comment>
<comment type="subcellular location">
    <subcellularLocation>
        <location evidence="1">Cytoplasm</location>
    </subcellularLocation>
</comment>
<comment type="miscellaneous">
    <text>This function is generally fulfilled by the C-terminal part of HisG, which is missing in some bacteria such as this one.</text>
</comment>
<comment type="similarity">
    <text evidence="2">Belongs to the class-II aminoacyl-tRNA synthetase family. HisZ subfamily.</text>
</comment>
<evidence type="ECO:0000250" key="1"/>
<evidence type="ECO:0000305" key="2"/>
<evidence type="ECO:0007829" key="3">
    <source>
        <dbReference type="PDB" id="1USY"/>
    </source>
</evidence>
<protein>
    <recommendedName>
        <fullName>ATP phosphoribosyltransferase regulatory subunit</fullName>
    </recommendedName>
</protein>
<proteinExistence type="evidence at protein level"/>
<organism>
    <name type="scientific">Thermotoga maritima (strain ATCC 43589 / DSM 3109 / JCM 10099 / NBRC 100826 / MSB8)</name>
    <dbReference type="NCBI Taxonomy" id="243274"/>
    <lineage>
        <taxon>Bacteria</taxon>
        <taxon>Thermotogati</taxon>
        <taxon>Thermotogota</taxon>
        <taxon>Thermotogae</taxon>
        <taxon>Thermotogales</taxon>
        <taxon>Thermotogaceae</taxon>
        <taxon>Thermotoga</taxon>
    </lineage>
</organism>
<gene>
    <name type="primary">hisZ</name>
    <name type="ordered locus">TM_1043</name>
</gene>
<accession>Q9X0D3</accession>
<name>HISZ_THEMA</name>
<sequence>MDFLDFEKVFSFYSKATKKGFSPFFVPALEKAEEPAGNFFLDRKGNLFSIREDFTKTVLNHRKRYSPDSQIKVWYADFVYRYSGSDLVAEYQLGLEKVPRNSLDDSLEVLEIIVESASEFFEGPVIVEIGHTGVYEDLLKEIPKDLHEKVLNLIDTKNLAEIEFLSHMKKIDLSRVEKIIEDSIYRRSPEHLKTMDLPLSVREDLLSASSFLQEKFPTVSVEIDLTLARTIEEYCGLIFTIYDTSSSRLVAAGGEYTVNGEKGVGGSIFLEGKTC</sequence>
<dbReference type="EMBL" id="AE000512">
    <property type="protein sequence ID" value="AAD36120.1"/>
    <property type="molecule type" value="Genomic_DNA"/>
</dbReference>
<dbReference type="PIR" id="B72305">
    <property type="entry name" value="B72305"/>
</dbReference>
<dbReference type="RefSeq" id="NP_228849.1">
    <property type="nucleotide sequence ID" value="NC_000853.1"/>
</dbReference>
<dbReference type="RefSeq" id="WP_010865251.1">
    <property type="nucleotide sequence ID" value="NZ_CP011107.1"/>
</dbReference>
<dbReference type="PDB" id="1USY">
    <property type="method" value="X-ray"/>
    <property type="resolution" value="2.52 A"/>
    <property type="chains" value="A/B/C/D=1-275"/>
</dbReference>
<dbReference type="PDBsum" id="1USY"/>
<dbReference type="SMR" id="Q9X0D3"/>
<dbReference type="STRING" id="243274.TM_1043"/>
<dbReference type="PaxDb" id="243274-THEMA_09145"/>
<dbReference type="EnsemblBacteria" id="AAD36120">
    <property type="protein sequence ID" value="AAD36120"/>
    <property type="gene ID" value="TM_1043"/>
</dbReference>
<dbReference type="KEGG" id="tma:TM1043"/>
<dbReference type="KEGG" id="tmi:THEMA_09145"/>
<dbReference type="PATRIC" id="fig|243274.18.peg.1772"/>
<dbReference type="eggNOG" id="COG3705">
    <property type="taxonomic scope" value="Bacteria"/>
</dbReference>
<dbReference type="InParanoid" id="Q9X0D3"/>
<dbReference type="OrthoDB" id="37028at2"/>
<dbReference type="UniPathway" id="UPA00031">
    <property type="reaction ID" value="UER00006"/>
</dbReference>
<dbReference type="EvolutionaryTrace" id="Q9X0D3"/>
<dbReference type="Proteomes" id="UP000008183">
    <property type="component" value="Chromosome"/>
</dbReference>
<dbReference type="GO" id="GO:0005737">
    <property type="term" value="C:cytoplasm"/>
    <property type="evidence" value="ECO:0007669"/>
    <property type="project" value="UniProtKB-SubCell"/>
</dbReference>
<dbReference type="GO" id="GO:0004821">
    <property type="term" value="F:histidine-tRNA ligase activity"/>
    <property type="evidence" value="ECO:0000318"/>
    <property type="project" value="GO_Central"/>
</dbReference>
<dbReference type="GO" id="GO:0006427">
    <property type="term" value="P:histidyl-tRNA aminoacylation"/>
    <property type="evidence" value="ECO:0000318"/>
    <property type="project" value="GO_Central"/>
</dbReference>
<dbReference type="GO" id="GO:0000105">
    <property type="term" value="P:L-histidine biosynthetic process"/>
    <property type="evidence" value="ECO:0007669"/>
    <property type="project" value="UniProtKB-UniRule"/>
</dbReference>
<dbReference type="FunFam" id="3.30.930.10:FF:000240">
    <property type="entry name" value="ATP phosphoribosyltransferase, predicted regulatory subunit"/>
    <property type="match status" value="1"/>
</dbReference>
<dbReference type="Gene3D" id="3.30.930.10">
    <property type="entry name" value="Bira Bifunctional Protein, Domain 2"/>
    <property type="match status" value="1"/>
</dbReference>
<dbReference type="HAMAP" id="MF_00125">
    <property type="entry name" value="HisZ"/>
    <property type="match status" value="1"/>
</dbReference>
<dbReference type="InterPro" id="IPR045864">
    <property type="entry name" value="aa-tRNA-synth_II/BPL/LPL"/>
</dbReference>
<dbReference type="InterPro" id="IPR041715">
    <property type="entry name" value="HisRS-like_core"/>
</dbReference>
<dbReference type="InterPro" id="IPR004516">
    <property type="entry name" value="HisRS/HisZ"/>
</dbReference>
<dbReference type="InterPro" id="IPR004517">
    <property type="entry name" value="HisZ"/>
</dbReference>
<dbReference type="PANTHER" id="PTHR43707:SF1">
    <property type="entry name" value="HISTIDINE--TRNA LIGASE, MITOCHONDRIAL-RELATED"/>
    <property type="match status" value="1"/>
</dbReference>
<dbReference type="PANTHER" id="PTHR43707">
    <property type="entry name" value="HISTIDYL-TRNA SYNTHETASE"/>
    <property type="match status" value="1"/>
</dbReference>
<dbReference type="Pfam" id="PF13393">
    <property type="entry name" value="tRNA-synt_His"/>
    <property type="match status" value="1"/>
</dbReference>
<dbReference type="SUPFAM" id="SSF55681">
    <property type="entry name" value="Class II aaRS and biotin synthetases"/>
    <property type="match status" value="1"/>
</dbReference>
<reference key="1">
    <citation type="journal article" date="1999" name="Nature">
        <title>Evidence for lateral gene transfer between Archaea and Bacteria from genome sequence of Thermotoga maritima.</title>
        <authorList>
            <person name="Nelson K.E."/>
            <person name="Clayton R.A."/>
            <person name="Gill S.R."/>
            <person name="Gwinn M.L."/>
            <person name="Dodson R.J."/>
            <person name="Haft D.H."/>
            <person name="Hickey E.K."/>
            <person name="Peterson J.D."/>
            <person name="Nelson W.C."/>
            <person name="Ketchum K.A."/>
            <person name="McDonald L.A."/>
            <person name="Utterback T.R."/>
            <person name="Malek J.A."/>
            <person name="Linher K.D."/>
            <person name="Garrett M.M."/>
            <person name="Stewart A.M."/>
            <person name="Cotton M.D."/>
            <person name="Pratt M.S."/>
            <person name="Phillips C.A."/>
            <person name="Richardson D.L."/>
            <person name="Heidelberg J.F."/>
            <person name="Sutton G.G."/>
            <person name="Fleischmann R.D."/>
            <person name="Eisen J.A."/>
            <person name="White O."/>
            <person name="Salzberg S.L."/>
            <person name="Smith H.O."/>
            <person name="Venter J.C."/>
            <person name="Fraser C.M."/>
        </authorList>
    </citation>
    <scope>NUCLEOTIDE SEQUENCE [LARGE SCALE GENOMIC DNA]</scope>
    <source>
        <strain>ATCC 43589 / DSM 3109 / JCM 10099 / NBRC 100826 / MSB8</strain>
    </source>
</reference>